<name>ALG44_AZOVI</name>
<sequence>MNTATLNVNVVHESEAQRQHARVKLPGKIRFLGPNRETIEQRLIDISAGGFSFASGKPVTQQGAFHRGKLLFQLDSLGLAMDVEFQVRNLDPESGRTGCQFHGLGAREISTLRQMITSHLSGELVTVGDVICTLQRDNFTEGRARARAWPSRSMFERLRAVSFSLAIFIVGLGAFGLILKQLYDLYFVTHAESGMVSVPSMEVTMPREGTVQSLVGPDGLVANGAPIASFSASMLEMLKGHLSEEQLNPANVEKLFTRQMKGTLTSPCDCKVVAQRVADGQFASKGQVIFELLPRDAAATVEARFRYHDFAKVKPGTQVTFSVPGEDQPRRGRIVSTALQNEGLSSDIRVLIQPEQPLDSALAGQPVEVVIDHGPSYDWLIDKAVTAGL</sequence>
<proteinExistence type="inferred from homology"/>
<feature type="chain" id="PRO_0000064551" description="Alginate biosynthesis protein Alg44">
    <location>
        <begin position="1"/>
        <end position="389"/>
    </location>
</feature>
<feature type="domain" description="PilZ">
    <location>
        <begin position="17"/>
        <end position="117"/>
    </location>
</feature>
<protein>
    <recommendedName>
        <fullName>Alginate biosynthesis protein Alg44</fullName>
    </recommendedName>
</protein>
<gene>
    <name type="primary">alg44</name>
</gene>
<organism>
    <name type="scientific">Azotobacter vinelandii</name>
    <dbReference type="NCBI Taxonomy" id="354"/>
    <lineage>
        <taxon>Bacteria</taxon>
        <taxon>Pseudomonadati</taxon>
        <taxon>Pseudomonadota</taxon>
        <taxon>Gammaproteobacteria</taxon>
        <taxon>Pseudomonadales</taxon>
        <taxon>Pseudomonadaceae</taxon>
        <taxon>Azotobacter</taxon>
    </lineage>
</organism>
<reference key="1">
    <citation type="journal article" date="1997" name="Gene">
        <title>The Azotobacter vinelandii alg8 and alg44 genes are essential for alginate synthesis and can be transcribed from an algD-independent promoter.</title>
        <authorList>
            <person name="Mejia-Ruiz H."/>
            <person name="Guzman J."/>
            <person name="Moreno S."/>
            <person name="Soberon-Chavez G."/>
            <person name="Espin G."/>
        </authorList>
    </citation>
    <scope>NUCLEOTIDE SEQUENCE [GENOMIC DNA]</scope>
    <source>
        <strain>ATCC 9046</strain>
    </source>
</reference>
<keyword id="KW-0016">Alginate biosynthesis</keyword>
<keyword id="KW-0574">Periplasm</keyword>
<dbReference type="EMBL" id="Y08819">
    <property type="protein sequence ID" value="CAA70054.1"/>
    <property type="molecule type" value="Genomic_DNA"/>
</dbReference>
<dbReference type="SMR" id="P94200"/>
<dbReference type="UniPathway" id="UPA00286"/>
<dbReference type="GO" id="GO:0042597">
    <property type="term" value="C:periplasmic space"/>
    <property type="evidence" value="ECO:0007669"/>
    <property type="project" value="UniProtKB-SubCell"/>
</dbReference>
<dbReference type="GO" id="GO:0035438">
    <property type="term" value="F:cyclic-di-GMP binding"/>
    <property type="evidence" value="ECO:0007669"/>
    <property type="project" value="InterPro"/>
</dbReference>
<dbReference type="GO" id="GO:0042121">
    <property type="term" value="P:alginic acid biosynthetic process"/>
    <property type="evidence" value="ECO:0007669"/>
    <property type="project" value="UniProtKB-UniPathway"/>
</dbReference>
<dbReference type="Gene3D" id="2.40.10.220">
    <property type="entry name" value="predicted glycosyltransferase like domains"/>
    <property type="match status" value="1"/>
</dbReference>
<dbReference type="InterPro" id="IPR050739">
    <property type="entry name" value="MFP"/>
</dbReference>
<dbReference type="InterPro" id="IPR009875">
    <property type="entry name" value="PilZ_domain"/>
</dbReference>
<dbReference type="PANTHER" id="PTHR30386">
    <property type="entry name" value="MEMBRANE FUSION SUBUNIT OF EMRAB-TOLC MULTIDRUG EFFLUX PUMP"/>
    <property type="match status" value="1"/>
</dbReference>
<dbReference type="PANTHER" id="PTHR30386:SF19">
    <property type="entry name" value="MULTIDRUG EXPORT PROTEIN EMRA-RELATED"/>
    <property type="match status" value="1"/>
</dbReference>
<dbReference type="Pfam" id="PF13437">
    <property type="entry name" value="HlyD_3"/>
    <property type="match status" value="1"/>
</dbReference>
<dbReference type="Pfam" id="PF07238">
    <property type="entry name" value="PilZ"/>
    <property type="match status" value="1"/>
</dbReference>
<dbReference type="SUPFAM" id="SSF141371">
    <property type="entry name" value="PilZ domain-like"/>
    <property type="match status" value="1"/>
</dbReference>
<accession>P94200</accession>
<comment type="function">
    <text>Required for alginate biosynthesis.</text>
</comment>
<comment type="pathway">
    <text>Glycan biosynthesis; alginate biosynthesis.</text>
</comment>
<comment type="subcellular location">
    <subcellularLocation>
        <location evidence="1">Periplasm</location>
    </subcellularLocation>
</comment>
<comment type="similarity">
    <text evidence="2">Belongs to the Alg44 family.</text>
</comment>
<evidence type="ECO:0000250" key="1"/>
<evidence type="ECO:0000305" key="2"/>